<comment type="function">
    <text evidence="1">Involved in the gluconeogenesis. Catalyzes stereospecifically the conversion of dihydroxyacetone phosphate (DHAP) to D-glyceraldehyde-3-phosphate (G3P).</text>
</comment>
<comment type="catalytic activity">
    <reaction evidence="1">
        <text>D-glyceraldehyde 3-phosphate = dihydroxyacetone phosphate</text>
        <dbReference type="Rhea" id="RHEA:18585"/>
        <dbReference type="ChEBI" id="CHEBI:57642"/>
        <dbReference type="ChEBI" id="CHEBI:59776"/>
        <dbReference type="EC" id="5.3.1.1"/>
    </reaction>
</comment>
<comment type="pathway">
    <text evidence="1">Carbohydrate biosynthesis; gluconeogenesis.</text>
</comment>
<comment type="pathway">
    <text evidence="1">Carbohydrate degradation; glycolysis; D-glyceraldehyde 3-phosphate from glycerone phosphate: step 1/1.</text>
</comment>
<comment type="subunit">
    <text evidence="1">Homodimer.</text>
</comment>
<comment type="subcellular location">
    <subcellularLocation>
        <location evidence="1">Cytoplasm</location>
    </subcellularLocation>
</comment>
<comment type="similarity">
    <text evidence="1">Belongs to the triosephosphate isomerase family.</text>
</comment>
<name>TPIS_HALH5</name>
<keyword id="KW-0963">Cytoplasm</keyword>
<keyword id="KW-0312">Gluconeogenesis</keyword>
<keyword id="KW-0324">Glycolysis</keyword>
<keyword id="KW-0413">Isomerase</keyword>
<keyword id="KW-0597">Phosphoprotein</keyword>
<keyword id="KW-1185">Reference proteome</keyword>
<accession>Q9K715</accession>
<organism>
    <name type="scientific">Halalkalibacterium halodurans (strain ATCC BAA-125 / DSM 18197 / FERM 7344 / JCM 9153 / C-125)</name>
    <name type="common">Bacillus halodurans</name>
    <dbReference type="NCBI Taxonomy" id="272558"/>
    <lineage>
        <taxon>Bacteria</taxon>
        <taxon>Bacillati</taxon>
        <taxon>Bacillota</taxon>
        <taxon>Bacilli</taxon>
        <taxon>Bacillales</taxon>
        <taxon>Bacillaceae</taxon>
        <taxon>Halalkalibacterium (ex Joshi et al. 2022)</taxon>
    </lineage>
</organism>
<protein>
    <recommendedName>
        <fullName evidence="1">Triosephosphate isomerase</fullName>
        <shortName evidence="1">TIM</shortName>
        <shortName evidence="1">TPI</shortName>
        <ecNumber evidence="1">5.3.1.1</ecNumber>
    </recommendedName>
    <alternativeName>
        <fullName evidence="1">Triose-phosphate isomerase</fullName>
    </alternativeName>
</protein>
<proteinExistence type="inferred from homology"/>
<sequence>MRKPIIAGNWKMNKTVGEAKAFVEEVKGAIPSSDKVDSVVCSPALFLEGLVQKAEGTELRIGAQNMHFEESGAFTGEISPVALSDMKVDYVILGHSERRDMFAETDELVNKKTHAAFAHGLTPIVCVGETLEEREANQTYDVVKTQVEKGLEGLTDEQVKVTVIAYEPVWAIGTGKSSSAEDANDVCSYIRKVVTEKFSQEAADAVRIQYGGSVKPANIAEYMAQSDIDGALVGGASLDPQSFLQLLEAVK</sequence>
<dbReference type="EC" id="5.3.1.1" evidence="1"/>
<dbReference type="EMBL" id="BA000004">
    <property type="protein sequence ID" value="BAB07277.1"/>
    <property type="molecule type" value="Genomic_DNA"/>
</dbReference>
<dbReference type="PIR" id="F84094">
    <property type="entry name" value="F84094"/>
</dbReference>
<dbReference type="RefSeq" id="WP_010899687.1">
    <property type="nucleotide sequence ID" value="NC_002570.2"/>
</dbReference>
<dbReference type="SMR" id="Q9K715"/>
<dbReference type="STRING" id="272558.gene:10729471"/>
<dbReference type="KEGG" id="bha:BH3558"/>
<dbReference type="eggNOG" id="COG0149">
    <property type="taxonomic scope" value="Bacteria"/>
</dbReference>
<dbReference type="HOGENOM" id="CLU_024251_2_3_9"/>
<dbReference type="OrthoDB" id="9809429at2"/>
<dbReference type="UniPathway" id="UPA00109">
    <property type="reaction ID" value="UER00189"/>
</dbReference>
<dbReference type="UniPathway" id="UPA00138"/>
<dbReference type="Proteomes" id="UP000001258">
    <property type="component" value="Chromosome"/>
</dbReference>
<dbReference type="GO" id="GO:0005829">
    <property type="term" value="C:cytosol"/>
    <property type="evidence" value="ECO:0007669"/>
    <property type="project" value="TreeGrafter"/>
</dbReference>
<dbReference type="GO" id="GO:0004807">
    <property type="term" value="F:triose-phosphate isomerase activity"/>
    <property type="evidence" value="ECO:0007669"/>
    <property type="project" value="UniProtKB-UniRule"/>
</dbReference>
<dbReference type="GO" id="GO:0006094">
    <property type="term" value="P:gluconeogenesis"/>
    <property type="evidence" value="ECO:0007669"/>
    <property type="project" value="UniProtKB-UniRule"/>
</dbReference>
<dbReference type="GO" id="GO:0046166">
    <property type="term" value="P:glyceraldehyde-3-phosphate biosynthetic process"/>
    <property type="evidence" value="ECO:0007669"/>
    <property type="project" value="TreeGrafter"/>
</dbReference>
<dbReference type="GO" id="GO:0019563">
    <property type="term" value="P:glycerol catabolic process"/>
    <property type="evidence" value="ECO:0007669"/>
    <property type="project" value="TreeGrafter"/>
</dbReference>
<dbReference type="GO" id="GO:0006096">
    <property type="term" value="P:glycolytic process"/>
    <property type="evidence" value="ECO:0007669"/>
    <property type="project" value="UniProtKB-UniRule"/>
</dbReference>
<dbReference type="CDD" id="cd00311">
    <property type="entry name" value="TIM"/>
    <property type="match status" value="1"/>
</dbReference>
<dbReference type="FunFam" id="3.20.20.70:FF:000016">
    <property type="entry name" value="Triosephosphate isomerase"/>
    <property type="match status" value="1"/>
</dbReference>
<dbReference type="Gene3D" id="3.20.20.70">
    <property type="entry name" value="Aldolase class I"/>
    <property type="match status" value="1"/>
</dbReference>
<dbReference type="HAMAP" id="MF_00147_B">
    <property type="entry name" value="TIM_B"/>
    <property type="match status" value="1"/>
</dbReference>
<dbReference type="InterPro" id="IPR013785">
    <property type="entry name" value="Aldolase_TIM"/>
</dbReference>
<dbReference type="InterPro" id="IPR035990">
    <property type="entry name" value="TIM_sf"/>
</dbReference>
<dbReference type="InterPro" id="IPR022896">
    <property type="entry name" value="TrioseP_Isoase_bac/euk"/>
</dbReference>
<dbReference type="InterPro" id="IPR000652">
    <property type="entry name" value="Triosephosphate_isomerase"/>
</dbReference>
<dbReference type="InterPro" id="IPR020861">
    <property type="entry name" value="Triosephosphate_isomerase_AS"/>
</dbReference>
<dbReference type="NCBIfam" id="TIGR00419">
    <property type="entry name" value="tim"/>
    <property type="match status" value="1"/>
</dbReference>
<dbReference type="PANTHER" id="PTHR21139">
    <property type="entry name" value="TRIOSEPHOSPHATE ISOMERASE"/>
    <property type="match status" value="1"/>
</dbReference>
<dbReference type="PANTHER" id="PTHR21139:SF42">
    <property type="entry name" value="TRIOSEPHOSPHATE ISOMERASE"/>
    <property type="match status" value="1"/>
</dbReference>
<dbReference type="Pfam" id="PF00121">
    <property type="entry name" value="TIM"/>
    <property type="match status" value="1"/>
</dbReference>
<dbReference type="SUPFAM" id="SSF51351">
    <property type="entry name" value="Triosephosphate isomerase (TIM)"/>
    <property type="match status" value="1"/>
</dbReference>
<dbReference type="PROSITE" id="PS00171">
    <property type="entry name" value="TIM_1"/>
    <property type="match status" value="1"/>
</dbReference>
<dbReference type="PROSITE" id="PS51440">
    <property type="entry name" value="TIM_2"/>
    <property type="match status" value="1"/>
</dbReference>
<gene>
    <name evidence="1" type="primary">tpiA</name>
    <name type="synonym">tpi</name>
    <name type="ordered locus">BH3558</name>
</gene>
<reference key="1">
    <citation type="journal article" date="2000" name="Nucleic Acids Res.">
        <title>Complete genome sequence of the alkaliphilic bacterium Bacillus halodurans and genomic sequence comparison with Bacillus subtilis.</title>
        <authorList>
            <person name="Takami H."/>
            <person name="Nakasone K."/>
            <person name="Takaki Y."/>
            <person name="Maeno G."/>
            <person name="Sasaki R."/>
            <person name="Masui N."/>
            <person name="Fuji F."/>
            <person name="Hirama C."/>
            <person name="Nakamura Y."/>
            <person name="Ogasawara N."/>
            <person name="Kuhara S."/>
            <person name="Horikoshi K."/>
        </authorList>
    </citation>
    <scope>NUCLEOTIDE SEQUENCE [LARGE SCALE GENOMIC DNA]</scope>
    <source>
        <strain>ATCC BAA-125 / DSM 18197 / FERM 7344 / JCM 9153 / C-125</strain>
    </source>
</reference>
<evidence type="ECO:0000255" key="1">
    <source>
        <dbReference type="HAMAP-Rule" id="MF_00147"/>
    </source>
</evidence>
<feature type="chain" id="PRO_0000090176" description="Triosephosphate isomerase">
    <location>
        <begin position="1"/>
        <end position="251"/>
    </location>
</feature>
<feature type="active site" description="Electrophile" evidence="1">
    <location>
        <position position="95"/>
    </location>
</feature>
<feature type="active site" description="Proton acceptor" evidence="1">
    <location>
        <position position="167"/>
    </location>
</feature>
<feature type="binding site" evidence="1">
    <location>
        <begin position="9"/>
        <end position="11"/>
    </location>
    <ligand>
        <name>substrate</name>
    </ligand>
</feature>
<feature type="binding site" evidence="1">
    <location>
        <position position="173"/>
    </location>
    <ligand>
        <name>substrate</name>
    </ligand>
</feature>
<feature type="binding site" evidence="1">
    <location>
        <position position="213"/>
    </location>
    <ligand>
        <name>substrate</name>
    </ligand>
</feature>
<feature type="binding site" evidence="1">
    <location>
        <begin position="234"/>
        <end position="235"/>
    </location>
    <ligand>
        <name>substrate</name>
    </ligand>
</feature>
<feature type="modified residue" description="Phosphoserine" evidence="1">
    <location>
        <position position="213"/>
    </location>
</feature>